<name>CSN5_HUMAN</name>
<keyword id="KW-0002">3D-structure</keyword>
<keyword id="KW-0007">Acetylation</keyword>
<keyword id="KW-0963">Cytoplasm</keyword>
<keyword id="KW-0968">Cytoplasmic vesicle</keyword>
<keyword id="KW-0903">Direct protein sequencing</keyword>
<keyword id="KW-0378">Hydrolase</keyword>
<keyword id="KW-0479">Metal-binding</keyword>
<keyword id="KW-0482">Metalloprotease</keyword>
<keyword id="KW-0539">Nucleus</keyword>
<keyword id="KW-0645">Protease</keyword>
<keyword id="KW-1267">Proteomics identification</keyword>
<keyword id="KW-1185">Reference proteome</keyword>
<keyword id="KW-0736">Signalosome</keyword>
<keyword id="KW-0770">Synapse</keyword>
<keyword id="KW-0862">Zinc</keyword>
<sequence length="334" mass="37579">MAASGSGMAQKTWELANNMQEAQSIDEIYKYDKKQQQEILAAKPWTKDHHYFKYCKISALALLKMVMHARSGGNLEVMGLMLGKVDGETMIIMDSFALPVEGTETRVNAQAAAYEYMAAYIENAKQVGRLENAIGWYHSHPGYGCWLSGIDVSTQMLNQQFQEPFVAVVIDPTRTISAGKVNLGAFRTYPKGYKPPDEGPSEYQTIPLNKIEDFGVHCKQYYALEVSYFKSSLDRKLLELLWNKYWVNTLSSSSLLTNADYTTGQVFDLSEKLEQSEAQLGRGSFMLGLETHDRKSEDKLAKATRDSCKTTIEAIHGLMSQVIKDKLFNQINIS</sequence>
<gene>
    <name type="primary">COPS5</name>
    <name type="synonym">CSN5</name>
    <name type="synonym">JAB1</name>
</gene>
<proteinExistence type="evidence at protein level"/>
<accession>Q92905</accession>
<accession>O15386</accession>
<accession>Q6AW95</accession>
<accession>Q86WQ4</accession>
<accession>Q9BQ17</accession>
<protein>
    <recommendedName>
        <fullName>COP9 signalosome complex subunit 5</fullName>
        <shortName>SGN5</shortName>
        <shortName>Signalosome subunit 5</shortName>
        <ecNumber>3.4.-.-</ecNumber>
    </recommendedName>
    <alternativeName>
        <fullName>Jun activation domain-binding protein 1</fullName>
    </alternativeName>
</protein>
<reference key="1">
    <citation type="journal article" date="1996" name="Nature">
        <title>A new group of conserved coactivators that increase the specificity of AP-1 transcription factors.</title>
        <authorList>
            <person name="Claret F.-X."/>
            <person name="Hibi M."/>
            <person name="Dhut S."/>
            <person name="Toda T."/>
            <person name="Karin M."/>
        </authorList>
    </citation>
    <scope>NUCLEOTIDE SEQUENCE [MRNA]</scope>
    <scope>INTERACTION WITH JUN</scope>
</reference>
<reference key="2">
    <citation type="journal article" date="1997" name="J. Biol. Chem.">
        <title>Structure of cDNAs encoding human eukaryotic initiation factor 3 subunits. Possible roles in RNA binding and macromolecular assembly.</title>
        <authorList>
            <person name="Asano K."/>
            <person name="Vornlocher H.-P."/>
            <person name="Richter-Cook N.J."/>
            <person name="Merrick W.C."/>
            <person name="Hinnebusch A.G."/>
            <person name="Hershey J.W.B."/>
        </authorList>
    </citation>
    <scope>NUCLEOTIDE SEQUENCE [MRNA]</scope>
</reference>
<reference key="3">
    <citation type="submission" date="2004-06" db="EMBL/GenBank/DDBJ databases">
        <title>Cloning of human full open reading frames in Gateway(TM) system entry vector (pDONR201).</title>
        <authorList>
            <person name="Halleck A."/>
            <person name="Ebert L."/>
            <person name="Mkoundinya M."/>
            <person name="Schick M."/>
            <person name="Eisenstein S."/>
            <person name="Neubert P."/>
            <person name="Kstrang K."/>
            <person name="Schatten R."/>
            <person name="Shen B."/>
            <person name="Henze S."/>
            <person name="Mar W."/>
            <person name="Korn B."/>
            <person name="Zuo D."/>
            <person name="Hu Y."/>
            <person name="LaBaer J."/>
        </authorList>
    </citation>
    <scope>NUCLEOTIDE SEQUENCE [LARGE SCALE MRNA]</scope>
</reference>
<reference key="4">
    <citation type="journal article" date="2004" name="Genome Res.">
        <title>The status, quality, and expansion of the NIH full-length cDNA project: the Mammalian Gene Collection (MGC).</title>
        <authorList>
            <consortium name="The MGC Project Team"/>
        </authorList>
    </citation>
    <scope>NUCLEOTIDE SEQUENCE [LARGE SCALE MRNA]</scope>
    <source>
        <tissue>Brain</tissue>
        <tissue>Eye</tissue>
        <tissue>Muscle</tissue>
    </source>
</reference>
<reference key="5">
    <citation type="journal article" date="2007" name="BMC Genomics">
        <title>The full-ORF clone resource of the German cDNA consortium.</title>
        <authorList>
            <person name="Bechtel S."/>
            <person name="Rosenfelder H."/>
            <person name="Duda A."/>
            <person name="Schmidt C.P."/>
            <person name="Ernst U."/>
            <person name="Wellenreuther R."/>
            <person name="Mehrle A."/>
            <person name="Schuster C."/>
            <person name="Bahr A."/>
            <person name="Bloecker H."/>
            <person name="Heubner D."/>
            <person name="Hoerlein A."/>
            <person name="Michel G."/>
            <person name="Wedler H."/>
            <person name="Koehrer K."/>
            <person name="Ottenwaelder B."/>
            <person name="Poustka A."/>
            <person name="Wiemann S."/>
            <person name="Schupp I."/>
        </authorList>
    </citation>
    <scope>NUCLEOTIDE SEQUENCE [LARGE SCALE MRNA] OF 1-47</scope>
    <source>
        <tissue>Liver</tissue>
    </source>
</reference>
<reference key="6">
    <citation type="submission" date="2005-10" db="UniProtKB">
        <authorList>
            <person name="Bienvenut W.V."/>
            <person name="Quadroni M."/>
        </authorList>
    </citation>
    <scope>PROTEIN SEQUENCE OF 2-11; 57-64; 181-187; 237-244 AND 273-282</scope>
    <scope>CLEAVAGE OF INITIATOR METHIONINE</scope>
    <scope>ACETYLATION AT ALA-2</scope>
    <scope>IDENTIFICATION BY MASS SPECTROMETRY</scope>
    <source>
        <tissue>Cervix carcinoma</tissue>
    </source>
</reference>
<reference key="7">
    <citation type="submission" date="2002-02" db="EMBL/GenBank/DDBJ databases">
        <title>The fusion gene of human Jun activation domain binding protein and membrane cofactor protein which cloned from multiple myeloma cell line ARH-77.</title>
        <authorList>
            <person name="Hu W."/>
            <person name="Tian J."/>
        </authorList>
    </citation>
    <scope>NUCLEOTIDE SEQUENCE [MRNA] OF 146-334</scope>
</reference>
<reference key="8">
    <citation type="journal article" date="1998" name="FASEB J.">
        <title>A novel protein complex involved in signal transduction possessing similarities to 26S proteasome subunits.</title>
        <authorList>
            <person name="Seeger M."/>
            <person name="Kraft R."/>
            <person name="Ferrell K."/>
            <person name="Bech-Otschir D."/>
            <person name="Dumdey R."/>
            <person name="Schade R."/>
            <person name="Gordon C."/>
            <person name="Naumann M."/>
            <person name="Dubiel W."/>
        </authorList>
    </citation>
    <scope>PARTIAL PROTEIN SEQUENCE</scope>
    <scope>FUNCTION</scope>
    <scope>SUBCELLULAR LOCATION</scope>
</reference>
<reference key="9">
    <citation type="journal article" date="1999" name="Oncogene">
        <title>The Bcl-3 oncoprotein acts as a bridging factor between NF-kappaB/Rel and nuclear co-regulators.</title>
        <authorList>
            <person name="Dechend R."/>
            <person name="Hirano F."/>
            <person name="Lehmann K."/>
            <person name="Heissmeyer V."/>
            <person name="Ansieau S."/>
            <person name="Wulczyn F.G."/>
            <person name="Scheidereit C."/>
            <person name="Leutz A."/>
        </authorList>
    </citation>
    <scope>INTERACTION WITH BCL3</scope>
</reference>
<reference key="10">
    <citation type="journal article" date="2000" name="J. Biol. Chem.">
        <title>JAB1 interacts with both the progesterone receptor and SRC-1.</title>
        <authorList>
            <person name="Chauchereau A."/>
            <person name="Georgiakaki M."/>
            <person name="Perrin-Wolff M."/>
            <person name="Milgrom E."/>
            <person name="Loosfelt H."/>
        </authorList>
    </citation>
    <scope>INTERACTION WITH NCOA1 AND PGR</scope>
</reference>
<reference key="11">
    <citation type="journal article" date="2000" name="Nature">
        <title>Intracellular action of the cytokine MIF to modulate AP-1 activity and the cell cycle through Jab1.</title>
        <authorList>
            <person name="Kleemann R."/>
            <person name="Hausser A."/>
            <person name="Geiger G."/>
            <person name="Mischke R."/>
            <person name="Burger-Kentischer A."/>
            <person name="Flieger O."/>
            <person name="Johannes F.-J."/>
            <person name="Roger T."/>
            <person name="Calandra T."/>
            <person name="Kapurniotu A."/>
            <person name="Grell M."/>
            <person name="Finkelmeier D."/>
            <person name="Brunner H."/>
            <person name="Bernhagen J."/>
        </authorList>
    </citation>
    <scope>INTERACTION WITH MIF</scope>
</reference>
<reference key="12">
    <citation type="journal article" date="2000" name="Nature">
        <title>Integrin LFA-1 interacts with the transcriptional co-activator JAB1 to modulate AP-1 activity.</title>
        <authorList>
            <person name="Bianchi E."/>
            <person name="Denti S."/>
            <person name="Granata A."/>
            <person name="Bossi G."/>
            <person name="Geginat J."/>
            <person name="Villa A."/>
            <person name="Rogge L."/>
            <person name="Pardi R."/>
        </authorList>
    </citation>
    <scope>INTERACTION WITH ITGB2</scope>
</reference>
<reference key="13">
    <citation type="journal article" date="2001" name="EMBO J.">
        <title>COP9 signalosome-specific phosphorylation targets p53 to degradation by the ubiquitin system.</title>
        <authorList>
            <person name="Bech-Otschir D."/>
            <person name="Kraft R."/>
            <person name="Huang X."/>
            <person name="Henklein P."/>
            <person name="Kapelari B."/>
            <person name="Pollmann C."/>
            <person name="Dubiel W."/>
        </authorList>
    </citation>
    <scope>FUNCTION</scope>
    <scope>INTERACTION WITH TP53</scope>
</reference>
<reference key="14">
    <citation type="journal article" date="2001" name="Science">
        <title>Promotion of NEDD-CUL1 conjugate cleavage by COP9 signalosome.</title>
        <authorList>
            <person name="Lyapina S."/>
            <person name="Cope G."/>
            <person name="Shevchenko A."/>
            <person name="Serino G."/>
            <person name="Tsuge T."/>
            <person name="Zhou C."/>
            <person name="Wolf D.A."/>
            <person name="Wei N."/>
            <person name="Shevchenko A."/>
            <person name="Deshaies R.J."/>
        </authorList>
    </citation>
    <scope>FUNCTION</scope>
    <scope>COMPOSITION OF THE CSN COMPLEX</scope>
</reference>
<reference key="15">
    <citation type="journal article" date="2002" name="EMBO Rep.">
        <title>Jab1 antagonizes TGF-beta signaling by inducing Smad4 degradation.</title>
        <authorList>
            <person name="Wan M."/>
            <person name="Cao X."/>
            <person name="Wu Y."/>
            <person name="Bai S."/>
            <person name="Wu L."/>
            <person name="Shi X."/>
            <person name="Wang N."/>
            <person name="Cao X."/>
        </authorList>
    </citation>
    <scope>INTERACTION WITH SMAD4</scope>
</reference>
<reference key="16">
    <citation type="journal article" date="2002" name="FASEB J.">
        <title>Intracrine hepatopoietin potentiates AP-1 activity through JAB1 independent of MAPK pathway.</title>
        <authorList>
            <person name="Lu C."/>
            <person name="Li Y."/>
            <person name="Zhao Y."/>
            <person name="Xing G."/>
            <person name="Tang F."/>
            <person name="Wang Q."/>
            <person name="Sun Y."/>
            <person name="Wei H."/>
            <person name="Yang X."/>
            <person name="Wu C."/>
            <person name="Chen J."/>
            <person name="Guan K.-L."/>
            <person name="Zhang C."/>
            <person name="Chen H."/>
            <person name="He F."/>
        </authorList>
    </citation>
    <scope>INTERACTION WITH GFER</scope>
</reference>
<reference key="17">
    <citation type="journal article" date="2002" name="Oncogene">
        <title>Interaction and colocalization of PGP9.5 with JAB1 and p27(Kip1).</title>
        <authorList>
            <person name="Caballero O.L."/>
            <person name="Resto V."/>
            <person name="Patturajan M."/>
            <person name="Meerzaman D."/>
            <person name="Guo M.Z."/>
            <person name="Engles J."/>
            <person name="Yochem R."/>
            <person name="Ratovitski E."/>
            <person name="Sidransky D."/>
            <person name="Jen J."/>
        </authorList>
    </citation>
    <scope>INTERACTION WITH UCHL1</scope>
</reference>
<reference key="18">
    <citation type="journal article" date="2003" name="Cell">
        <title>The ubiquitin ligase activity in the DDB2 and CSA complexes is differentially regulated by the COP9 signalosome in response to DNA damage.</title>
        <authorList>
            <person name="Groisman R."/>
            <person name="Polanowska J."/>
            <person name="Kuraoka I."/>
            <person name="Sawada J."/>
            <person name="Saijo M."/>
            <person name="Drapkin R."/>
            <person name="Kisselev A.F."/>
            <person name="Tanaka K."/>
            <person name="Nakatani Y."/>
        </authorList>
    </citation>
    <scope>FUNCTION</scope>
</reference>
<reference key="19">
    <citation type="journal article" date="2003" name="EMBO J.">
        <title>Protein kinase CK2 and protein kinase D are associated with the COP9 signalosome.</title>
        <authorList>
            <person name="Uhle S."/>
            <person name="Medalia O."/>
            <person name="Waldron R."/>
            <person name="Dumdey R."/>
            <person name="Henklein P."/>
            <person name="Bech-Otschir D."/>
            <person name="Huang X."/>
            <person name="Berse M."/>
            <person name="Sperling J."/>
            <person name="Schade R."/>
            <person name="Dubiel W."/>
        </authorList>
    </citation>
    <scope>FUNCTION</scope>
</reference>
<reference key="20">
    <citation type="journal article" date="2003" name="J. Biol. Chem.">
        <title>Serine/threonine kinase Mirk/Dyrk1B is an inhibitor of epithelial cell migration and is negatively regulated by the Met adaptor Ran-binding protein M.</title>
        <authorList>
            <person name="Zou Y."/>
            <person name="Lim S."/>
            <person name="Lee K."/>
            <person name="Deng X."/>
            <person name="Friedman E."/>
        </authorList>
    </citation>
    <scope>IDENTIFICATION IN A COMPLEX WITH RAN; RANBP9 AND DYRK1B</scope>
</reference>
<reference key="21">
    <citation type="journal article" date="2004" name="J. Biol. Chem.">
        <title>Interaction between glucose-regulated destruction domain of DNA topoisomerase IIalpha and MPN domain of Jab1/CSN5.</title>
        <authorList>
            <person name="Yun J."/>
            <person name="Tomida A."/>
            <person name="Andoh T."/>
            <person name="Tsuruo T."/>
        </authorList>
    </citation>
    <scope>INTERACTION WITH TOP2A</scope>
</reference>
<reference key="22">
    <citation type="journal article" date="2004" name="Mol. Cell. Biol.">
        <title>Jab1/CSN5, a component of the COP9 signalosome, regulates transforming growth factor beta signaling by binding to Smad7 and promoting its degradation.</title>
        <authorList>
            <person name="Kim B.-C."/>
            <person name="Lee H.-J."/>
            <person name="Park S.H."/>
            <person name="Lee S.R."/>
            <person name="Karpova T.S."/>
            <person name="McNally J.G."/>
            <person name="Felici A."/>
            <person name="Lee D.K."/>
            <person name="Kim S.-J."/>
        </authorList>
    </citation>
    <scope>INTERACTION WITH SMAD7</scope>
</reference>
<reference key="23">
    <citation type="journal article" date="2006" name="Biochem. Biophys. Res. Commun.">
        <title>Interaction of the stress protein p8 with Jab1 is required for Jab1-dependent p27 nuclear-to-cytoplasm translocation.</title>
        <authorList>
            <person name="Malicet C."/>
            <person name="Hoffmeister A."/>
            <person name="Moreno S."/>
            <person name="Closa D."/>
            <person name="Dagorn J.C."/>
            <person name="Vasseur S."/>
            <person name="Iovanna J.L."/>
        </authorList>
    </citation>
    <scope>INTERACTION WITH NUPR1</scope>
</reference>
<reference key="24">
    <citation type="journal article" date="2006" name="Biochim. Biophys. Acta">
        <title>Molecular cloning and characterization of human Aph2 gene, involved in AP-1 regulation by interaction with JAB1.</title>
        <authorList>
            <person name="Zhang F."/>
            <person name="Di Y."/>
            <person name="Li J."/>
            <person name="Shi Y."/>
            <person name="Zhang L."/>
            <person name="Wang C."/>
            <person name="He X."/>
            <person name="Liu Y."/>
            <person name="Wan D."/>
            <person name="Huo K."/>
            <person name="Gu J."/>
        </authorList>
    </citation>
    <scope>INTERACTION WITH ZDHHC16</scope>
    <source>
        <tissue>Placenta</tissue>
    </source>
</reference>
<reference key="25">
    <citation type="journal article" date="2006" name="Proc. Natl. Acad. Sci. U.S.A.">
        <title>RIG-G as a key mediator of the antiproliferative activity of interferon-related pathways through enhancing p21 and p27 proteins.</title>
        <authorList>
            <person name="Xiao S."/>
            <person name="Li D."/>
            <person name="Zhu H.Q."/>
            <person name="Song M.G."/>
            <person name="Pan X.R."/>
            <person name="Jia P.M."/>
            <person name="Peng L.L."/>
            <person name="Dou A.X."/>
            <person name="Chen G.Q."/>
            <person name="Chen S.J."/>
            <person name="Chen Z."/>
            <person name="Tong J.H."/>
        </authorList>
    </citation>
    <scope>SUBCELLULAR LOCATION</scope>
    <scope>INTERACTION WITH IFIT3</scope>
</reference>
<reference key="26">
    <citation type="journal article" date="2008" name="J. Proteome Res.">
        <title>Characterization of the human COP9 signalosome complex using affinity purification and mass spectrometry.</title>
        <authorList>
            <person name="Fang L."/>
            <person name="Wang X."/>
            <person name="Yamoah K."/>
            <person name="Chen P.L."/>
            <person name="Pan Z.Q."/>
            <person name="Huang L."/>
        </authorList>
    </citation>
    <scope>IDENTIFICATION IN THE CSN COMPLEX</scope>
    <scope>CLEAVAGE OF INITIATOR METHIONINE</scope>
    <scope>ACETYLATION AT ALA-2</scope>
</reference>
<reference key="27">
    <citation type="journal article" date="2008" name="Proc. Natl. Acad. Sci. U.S.A.">
        <title>A quantitative atlas of mitotic phosphorylation.</title>
        <authorList>
            <person name="Dephoure N."/>
            <person name="Zhou C."/>
            <person name="Villen J."/>
            <person name="Beausoleil S.A."/>
            <person name="Bakalarski C.E."/>
            <person name="Elledge S.J."/>
            <person name="Gygi S.P."/>
        </authorList>
    </citation>
    <scope>IDENTIFICATION BY MASS SPECTROMETRY [LARGE SCALE ANALYSIS]</scope>
    <source>
        <tissue>Cervix carcinoma</tissue>
    </source>
</reference>
<reference key="28">
    <citation type="journal article" date="2009" name="EMBO J.">
        <title>K63-specific deubiquitination by two JAMM/MPN+ complexes: BRISC-associated Brcc36 and proteasomal Poh1.</title>
        <authorList>
            <person name="Cooper E.M."/>
            <person name="Cutcliffe C."/>
            <person name="Kristiansen T.Z."/>
            <person name="Pandey A."/>
            <person name="Pickart C.M."/>
            <person name="Cohen R.E."/>
        </authorList>
    </citation>
    <scope>FUNCTION</scope>
    <scope>IDENTIFICATION IN THE SIGNALOSOME COMPLEX</scope>
    <scope>INTERACTION WITH THE BRISC COMPLEX</scope>
    <scope>MUTAGENESIS OF HIS-138</scope>
</reference>
<reference key="29">
    <citation type="journal article" date="2011" name="BMC Syst. Biol.">
        <title>Initial characterization of the human central proteome.</title>
        <authorList>
            <person name="Burkard T.R."/>
            <person name="Planyavsky M."/>
            <person name="Kaupe I."/>
            <person name="Breitwieser F.P."/>
            <person name="Buerckstuemmer T."/>
            <person name="Bennett K.L."/>
            <person name="Superti-Furga G."/>
            <person name="Colinge J."/>
        </authorList>
    </citation>
    <scope>IDENTIFICATION BY MASS SPECTROMETRY [LARGE SCALE ANALYSIS]</scope>
</reference>
<reference key="30">
    <citation type="journal article" date="2011" name="Cell. Mol. Life Sci.">
        <title>Fank1 interacts with Jab1 and regulates cell apoptosis via the AP-1 pathway.</title>
        <authorList>
            <person name="Wang H."/>
            <person name="Song W."/>
            <person name="Hu T."/>
            <person name="Zhang N."/>
            <person name="Miao S."/>
            <person name="Zong S."/>
            <person name="Wang L."/>
        </authorList>
    </citation>
    <scope>FUNCTION</scope>
    <scope>INTERACTION WITH FANK1</scope>
    <scope>SUBCELLULAR LOCATION</scope>
</reference>
<reference key="31">
    <citation type="journal article" date="2011" name="EMBO J.">
        <title>CSN complex controls the stability of selected synaptic proteins via a torsinA-dependent process.</title>
        <authorList>
            <person name="Granata A."/>
            <person name="Koo S.J."/>
            <person name="Haucke V."/>
            <person name="Schiavo G."/>
            <person name="Warner T.T."/>
        </authorList>
    </citation>
    <scope>SUBCELLULAR LOCATION</scope>
</reference>
<reference key="32">
    <citation type="journal article" date="2011" name="Oncogene">
        <title>C10ORF97 is a novel tumor-suppressor gene of non-small-cell lung cancer and a functional variant of this gene increases the risk of non-small-cell lung cancer.</title>
        <authorList>
            <person name="Shi Y."/>
            <person name="Chen J."/>
            <person name="Li Z."/>
            <person name="Zhang Z."/>
            <person name="Yu H."/>
            <person name="Sun K."/>
            <person name="Wang X."/>
            <person name="Song X."/>
            <person name="Wang Y."/>
            <person name="Zhen Y."/>
            <person name="Yang T."/>
            <person name="Lou K."/>
            <person name="Zhang Y."/>
            <person name="Zhang G."/>
            <person name="Hu Y."/>
            <person name="Ji J."/>
            <person name="Hui R."/>
        </authorList>
    </citation>
    <scope>INTERACTION WITH MINDY3</scope>
</reference>
<reference key="33">
    <citation type="journal article" date="2012" name="Biochem. Biophys. Res. Commun.">
        <title>Jab1 interacts with brain-specific kinase 2 (BRSK2) and promotes its degradation in the ubiquitin-proteasome pathway.</title>
        <authorList>
            <person name="Zhou J."/>
            <person name="Wan B."/>
            <person name="Li R."/>
            <person name="Gu X."/>
            <person name="Zhong Z."/>
            <person name="Wang Y."/>
            <person name="Yu L."/>
        </authorList>
    </citation>
    <scope>FUNCTION</scope>
    <scope>INTERACTION WITH BRSK2</scope>
    <scope>SUBCELLULAR LOCATION</scope>
</reference>
<reference key="34">
    <citation type="journal article" date="2013" name="PLoS ONE">
        <title>Myeloma overexpressed 2 (Myeov2) regulates L11 subnuclear localization through Nedd8 modification.</title>
        <authorList>
            <person name="Ebina M."/>
            <person name="Tsuruta F."/>
            <person name="Katoh M.C."/>
            <person name="Kigoshi Y."/>
            <person name="Someya A."/>
            <person name="Chiba T."/>
        </authorList>
    </citation>
    <scope>INTERACTION WITH COSP9</scope>
</reference>
<reference key="35">
    <citation type="journal article" date="2015" name="Cell Rep.">
        <title>CSNAP is a stoichiometric subunit of the COP9 signalosome.</title>
        <authorList>
            <person name="Rozen S."/>
            <person name="Fuezesi-Levi M.G."/>
            <person name="Ben-Nissan G."/>
            <person name="Mizrachi L."/>
            <person name="Gabashvili A."/>
            <person name="Levin Y."/>
            <person name="Ben-Dor S."/>
            <person name="Eisenstein M."/>
            <person name="Sharon M."/>
        </authorList>
    </citation>
    <scope>COMPOSITION OF THE CSN COMPLEX</scope>
    <scope>INTERACTION WITH COPS9</scope>
</reference>
<dbReference type="EC" id="3.4.-.-"/>
<dbReference type="EMBL" id="U65928">
    <property type="protein sequence ID" value="AAB16847.1"/>
    <property type="molecule type" value="mRNA"/>
</dbReference>
<dbReference type="EMBL" id="U70734">
    <property type="protein sequence ID" value="AAD03468.1"/>
    <property type="molecule type" value="mRNA"/>
</dbReference>
<dbReference type="EMBL" id="CR541678">
    <property type="protein sequence ID" value="CAG46479.1"/>
    <property type="molecule type" value="mRNA"/>
</dbReference>
<dbReference type="EMBL" id="BC001187">
    <property type="protein sequence ID" value="AAH01187.1"/>
    <property type="molecule type" value="mRNA"/>
</dbReference>
<dbReference type="EMBL" id="BC001859">
    <property type="protein sequence ID" value="AAH01859.1"/>
    <property type="molecule type" value="mRNA"/>
</dbReference>
<dbReference type="EMBL" id="BC007272">
    <property type="protein sequence ID" value="AAH07272.1"/>
    <property type="molecule type" value="mRNA"/>
</dbReference>
<dbReference type="EMBL" id="BX648542">
    <property type="protein sequence ID" value="CAH10375.1"/>
    <property type="molecule type" value="mRNA"/>
</dbReference>
<dbReference type="EMBL" id="AY078082">
    <property type="protein sequence ID" value="AAL82571.1"/>
    <property type="status" value="ALT_INIT"/>
    <property type="molecule type" value="mRNA"/>
</dbReference>
<dbReference type="CCDS" id="CCDS6198.1"/>
<dbReference type="PIR" id="S71820">
    <property type="entry name" value="S71820"/>
</dbReference>
<dbReference type="RefSeq" id="NP_006828.2">
    <property type="nucleotide sequence ID" value="NM_006837.2"/>
</dbReference>
<dbReference type="PDB" id="4D10">
    <property type="method" value="X-ray"/>
    <property type="resolution" value="3.80 A"/>
    <property type="chains" value="E/M=1-334"/>
</dbReference>
<dbReference type="PDB" id="4D18">
    <property type="method" value="X-ray"/>
    <property type="resolution" value="4.08 A"/>
    <property type="chains" value="E/M=12-334"/>
</dbReference>
<dbReference type="PDB" id="4F7O">
    <property type="method" value="X-ray"/>
    <property type="resolution" value="2.60 A"/>
    <property type="chains" value="A/B=1-257"/>
</dbReference>
<dbReference type="PDB" id="4WSN">
    <property type="method" value="X-ray"/>
    <property type="resolution" value="5.50 A"/>
    <property type="chains" value="E/M/U/c/k/s=14-334"/>
</dbReference>
<dbReference type="PDB" id="5JOG">
    <property type="method" value="X-ray"/>
    <property type="resolution" value="2.46 A"/>
    <property type="chains" value="A=2-257"/>
</dbReference>
<dbReference type="PDB" id="5JOH">
    <property type="method" value="X-ray"/>
    <property type="resolution" value="1.99 A"/>
    <property type="chains" value="A=2-257"/>
</dbReference>
<dbReference type="PDB" id="5M5Q">
    <property type="method" value="X-ray"/>
    <property type="resolution" value="2.20 A"/>
    <property type="chains" value="A=2-257"/>
</dbReference>
<dbReference type="PDB" id="6R6H">
    <property type="method" value="EM"/>
    <property type="resolution" value="8.40 A"/>
    <property type="chains" value="E=1-334"/>
</dbReference>
<dbReference type="PDB" id="6R7F">
    <property type="method" value="EM"/>
    <property type="resolution" value="8.20 A"/>
    <property type="chains" value="E=24-334"/>
</dbReference>
<dbReference type="PDB" id="6R7H">
    <property type="method" value="EM"/>
    <property type="resolution" value="8.80 A"/>
    <property type="chains" value="E=24-334"/>
</dbReference>
<dbReference type="PDB" id="6R7I">
    <property type="method" value="EM"/>
    <property type="resolution" value="5.90 A"/>
    <property type="chains" value="E=1-334"/>
</dbReference>
<dbReference type="PDB" id="8H38">
    <property type="method" value="EM"/>
    <property type="resolution" value="4.25 A"/>
    <property type="chains" value="E=1-334"/>
</dbReference>
<dbReference type="PDB" id="8H3A">
    <property type="method" value="EM"/>
    <property type="resolution" value="7.51 A"/>
    <property type="chains" value="E=1-334"/>
</dbReference>
<dbReference type="PDB" id="8H3F">
    <property type="method" value="EM"/>
    <property type="resolution" value="6.73 A"/>
    <property type="chains" value="E=1-334"/>
</dbReference>
<dbReference type="PDBsum" id="4D10"/>
<dbReference type="PDBsum" id="4D18"/>
<dbReference type="PDBsum" id="4F7O"/>
<dbReference type="PDBsum" id="4WSN"/>
<dbReference type="PDBsum" id="5JOG"/>
<dbReference type="PDBsum" id="5JOH"/>
<dbReference type="PDBsum" id="5M5Q"/>
<dbReference type="PDBsum" id="6R6H"/>
<dbReference type="PDBsum" id="6R7F"/>
<dbReference type="PDBsum" id="6R7H"/>
<dbReference type="PDBsum" id="6R7I"/>
<dbReference type="PDBsum" id="8H38"/>
<dbReference type="PDBsum" id="8H3A"/>
<dbReference type="PDBsum" id="8H3F"/>
<dbReference type="EMDB" id="EMD-3313"/>
<dbReference type="EMDB" id="EMD-3314"/>
<dbReference type="EMDB" id="EMD-3315"/>
<dbReference type="EMDB" id="EMD-3316"/>
<dbReference type="EMDB" id="EMD-3317"/>
<dbReference type="EMDB" id="EMD-3401"/>
<dbReference type="EMDB" id="EMD-34455"/>
<dbReference type="EMDB" id="EMD-34462"/>
<dbReference type="EMDB" id="EMD-34467"/>
<dbReference type="EMDB" id="EMD-4736"/>
<dbReference type="EMDB" id="EMD-4739"/>
<dbReference type="EMDB" id="EMD-4741"/>
<dbReference type="EMDB" id="EMD-4742"/>
<dbReference type="SMR" id="Q92905"/>
<dbReference type="BioGRID" id="116183">
    <property type="interactions" value="1106"/>
</dbReference>
<dbReference type="ComplexPortal" id="CPX-1870">
    <property type="entry name" value="COP9 signalosome variant 1"/>
</dbReference>
<dbReference type="ComplexPortal" id="CPX-1871">
    <property type="entry name" value="COP9 signalosome variant 2"/>
</dbReference>
<dbReference type="CORUM" id="Q92905"/>
<dbReference type="DIP" id="DIP-34546N"/>
<dbReference type="FunCoup" id="Q92905">
    <property type="interactions" value="4119"/>
</dbReference>
<dbReference type="IntAct" id="Q92905">
    <property type="interactions" value="731"/>
</dbReference>
<dbReference type="MINT" id="Q92905"/>
<dbReference type="STRING" id="9606.ENSP00000350512"/>
<dbReference type="BindingDB" id="Q92905"/>
<dbReference type="ChEMBL" id="CHEMBL4105809"/>
<dbReference type="MEROPS" id="M67.002"/>
<dbReference type="GlyGen" id="Q92905">
    <property type="glycosylation" value="1 site, 1 O-linked glycan (1 site)"/>
</dbReference>
<dbReference type="iPTMnet" id="Q92905"/>
<dbReference type="MetOSite" id="Q92905"/>
<dbReference type="PhosphoSitePlus" id="Q92905"/>
<dbReference type="SwissPalm" id="Q92905"/>
<dbReference type="BioMuta" id="COPS5"/>
<dbReference type="DMDM" id="55976562"/>
<dbReference type="REPRODUCTION-2DPAGE" id="IPI00009958"/>
<dbReference type="jPOST" id="Q92905"/>
<dbReference type="MassIVE" id="Q92905"/>
<dbReference type="PaxDb" id="9606-ENSP00000350512"/>
<dbReference type="PeptideAtlas" id="Q92905"/>
<dbReference type="ProteomicsDB" id="75591"/>
<dbReference type="Pumba" id="Q92905"/>
<dbReference type="Antibodypedia" id="1439">
    <property type="antibodies" value="534 antibodies from 43 providers"/>
</dbReference>
<dbReference type="DNASU" id="10987"/>
<dbReference type="Ensembl" id="ENST00000357849.9">
    <property type="protein sequence ID" value="ENSP00000350512.4"/>
    <property type="gene ID" value="ENSG00000121022.14"/>
</dbReference>
<dbReference type="GeneID" id="10987"/>
<dbReference type="KEGG" id="hsa:10987"/>
<dbReference type="MANE-Select" id="ENST00000357849.9">
    <property type="protein sequence ID" value="ENSP00000350512.4"/>
    <property type="RefSeq nucleotide sequence ID" value="NM_006837.3"/>
    <property type="RefSeq protein sequence ID" value="NP_006828.2"/>
</dbReference>
<dbReference type="UCSC" id="uc003xxe.4">
    <property type="organism name" value="human"/>
</dbReference>
<dbReference type="AGR" id="HGNC:2240"/>
<dbReference type="CTD" id="10987"/>
<dbReference type="DisGeNET" id="10987"/>
<dbReference type="GeneCards" id="COPS5"/>
<dbReference type="HGNC" id="HGNC:2240">
    <property type="gene designation" value="COPS5"/>
</dbReference>
<dbReference type="HPA" id="ENSG00000121022">
    <property type="expression patterns" value="Low tissue specificity"/>
</dbReference>
<dbReference type="MIM" id="604850">
    <property type="type" value="gene"/>
</dbReference>
<dbReference type="neXtProt" id="NX_Q92905"/>
<dbReference type="OpenTargets" id="ENSG00000121022"/>
<dbReference type="PharmGKB" id="PA26757"/>
<dbReference type="VEuPathDB" id="HostDB:ENSG00000121022"/>
<dbReference type="eggNOG" id="KOG1554">
    <property type="taxonomic scope" value="Eukaryota"/>
</dbReference>
<dbReference type="GeneTree" id="ENSGT00550000074850"/>
<dbReference type="HOGENOM" id="CLU_053034_0_1_1"/>
<dbReference type="InParanoid" id="Q92905"/>
<dbReference type="OMA" id="VKMKLFQ"/>
<dbReference type="OrthoDB" id="10266268at2759"/>
<dbReference type="PAN-GO" id="Q92905">
    <property type="GO annotations" value="5 GO annotations based on evolutionary models"/>
</dbReference>
<dbReference type="PhylomeDB" id="Q92905"/>
<dbReference type="TreeFam" id="TF105601"/>
<dbReference type="PathwayCommons" id="Q92905"/>
<dbReference type="Reactome" id="R-HSA-5696394">
    <property type="pathway name" value="DNA Damage Recognition in GG-NER"/>
</dbReference>
<dbReference type="Reactome" id="R-HSA-6781823">
    <property type="pathway name" value="Formation of TC-NER Pre-Incision Complex"/>
</dbReference>
<dbReference type="Reactome" id="R-HSA-8856825">
    <property type="pathway name" value="Cargo recognition for clathrin-mediated endocytosis"/>
</dbReference>
<dbReference type="Reactome" id="R-HSA-8951664">
    <property type="pathway name" value="Neddylation"/>
</dbReference>
<dbReference type="SignaLink" id="Q92905"/>
<dbReference type="SIGNOR" id="Q92905"/>
<dbReference type="BioGRID-ORCS" id="10987">
    <property type="hits" value="793 hits in 1146 CRISPR screens"/>
</dbReference>
<dbReference type="CD-CODE" id="8C2F96ED">
    <property type="entry name" value="Centrosome"/>
</dbReference>
<dbReference type="ChiTaRS" id="COPS5">
    <property type="organism name" value="human"/>
</dbReference>
<dbReference type="EvolutionaryTrace" id="Q92905"/>
<dbReference type="GenomeRNAi" id="10987"/>
<dbReference type="Pharos" id="Q92905">
    <property type="development level" value="Tchem"/>
</dbReference>
<dbReference type="PRO" id="PR:Q92905"/>
<dbReference type="Proteomes" id="UP000005640">
    <property type="component" value="Chromosome 8"/>
</dbReference>
<dbReference type="RNAct" id="Q92905">
    <property type="molecule type" value="protein"/>
</dbReference>
<dbReference type="Bgee" id="ENSG00000121022">
    <property type="expression patterns" value="Expressed in sperm and 210 other cell types or tissues"/>
</dbReference>
<dbReference type="ExpressionAtlas" id="Q92905">
    <property type="expression patterns" value="baseline and differential"/>
</dbReference>
<dbReference type="GO" id="GO:0000785">
    <property type="term" value="C:chromatin"/>
    <property type="evidence" value="ECO:0000314"/>
    <property type="project" value="UniProtKB"/>
</dbReference>
<dbReference type="GO" id="GO:0008180">
    <property type="term" value="C:COP9 signalosome"/>
    <property type="evidence" value="ECO:0000314"/>
    <property type="project" value="UniProtKB"/>
</dbReference>
<dbReference type="GO" id="GO:0005737">
    <property type="term" value="C:cytoplasm"/>
    <property type="evidence" value="ECO:0000314"/>
    <property type="project" value="UniProtKB"/>
</dbReference>
<dbReference type="GO" id="GO:0005829">
    <property type="term" value="C:cytosol"/>
    <property type="evidence" value="ECO:0000314"/>
    <property type="project" value="UniProtKB"/>
</dbReference>
<dbReference type="GO" id="GO:0005852">
    <property type="term" value="C:eukaryotic translation initiation factor 3 complex"/>
    <property type="evidence" value="ECO:0000304"/>
    <property type="project" value="ProtInc"/>
</dbReference>
<dbReference type="GO" id="GO:0005654">
    <property type="term" value="C:nucleoplasm"/>
    <property type="evidence" value="ECO:0000314"/>
    <property type="project" value="HPA"/>
</dbReference>
<dbReference type="GO" id="GO:0005634">
    <property type="term" value="C:nucleus"/>
    <property type="evidence" value="ECO:0000314"/>
    <property type="project" value="UniProtKB"/>
</dbReference>
<dbReference type="GO" id="GO:0048471">
    <property type="term" value="C:perinuclear region of cytoplasm"/>
    <property type="evidence" value="ECO:0000314"/>
    <property type="project" value="UniProtKB"/>
</dbReference>
<dbReference type="GO" id="GO:0008021">
    <property type="term" value="C:synaptic vesicle"/>
    <property type="evidence" value="ECO:0000314"/>
    <property type="project" value="UniProtKB"/>
</dbReference>
<dbReference type="GO" id="GO:0019784">
    <property type="term" value="F:deNEDDylase activity"/>
    <property type="evidence" value="ECO:0000318"/>
    <property type="project" value="GO_Central"/>
</dbReference>
<dbReference type="GO" id="GO:0019899">
    <property type="term" value="F:enzyme binding"/>
    <property type="evidence" value="ECO:0007669"/>
    <property type="project" value="Ensembl"/>
</dbReference>
<dbReference type="GO" id="GO:0035718">
    <property type="term" value="F:macrophage migration inhibitory factor binding"/>
    <property type="evidence" value="ECO:0007669"/>
    <property type="project" value="Ensembl"/>
</dbReference>
<dbReference type="GO" id="GO:0046872">
    <property type="term" value="F:metal ion binding"/>
    <property type="evidence" value="ECO:0007669"/>
    <property type="project" value="UniProtKB-KW"/>
</dbReference>
<dbReference type="GO" id="GO:0140492">
    <property type="term" value="F:metal-dependent deubiquitinase activity"/>
    <property type="evidence" value="ECO:0000314"/>
    <property type="project" value="FlyBase"/>
</dbReference>
<dbReference type="GO" id="GO:0008237">
    <property type="term" value="F:metallopeptidase activity"/>
    <property type="evidence" value="ECO:0000315"/>
    <property type="project" value="UniProtKB"/>
</dbReference>
<dbReference type="GO" id="GO:0003713">
    <property type="term" value="F:transcription coactivator activity"/>
    <property type="evidence" value="ECO:0000304"/>
    <property type="project" value="ProtInc"/>
</dbReference>
<dbReference type="GO" id="GO:0003743">
    <property type="term" value="F:translation initiation factor activity"/>
    <property type="evidence" value="ECO:0000304"/>
    <property type="project" value="ProtInc"/>
</dbReference>
<dbReference type="GO" id="GO:1990182">
    <property type="term" value="P:exosomal secretion"/>
    <property type="evidence" value="ECO:0000314"/>
    <property type="project" value="FlyBase"/>
</dbReference>
<dbReference type="GO" id="GO:0043066">
    <property type="term" value="P:negative regulation of apoptotic process"/>
    <property type="evidence" value="ECO:0000315"/>
    <property type="project" value="UniProtKB"/>
</dbReference>
<dbReference type="GO" id="GO:0051091">
    <property type="term" value="P:positive regulation of DNA-binding transcription factor activity"/>
    <property type="evidence" value="ECO:0000314"/>
    <property type="project" value="UniProtKB"/>
</dbReference>
<dbReference type="GO" id="GO:0045944">
    <property type="term" value="P:positive regulation of transcription by RNA polymerase II"/>
    <property type="evidence" value="ECO:0000314"/>
    <property type="project" value="UniProtKB"/>
</dbReference>
<dbReference type="GO" id="GO:0043687">
    <property type="term" value="P:post-translational protein modification"/>
    <property type="evidence" value="ECO:0000304"/>
    <property type="project" value="Reactome"/>
</dbReference>
<dbReference type="GO" id="GO:0000338">
    <property type="term" value="P:protein deneddylation"/>
    <property type="evidence" value="ECO:0000314"/>
    <property type="project" value="UniProtKB"/>
</dbReference>
<dbReference type="GO" id="GO:0045116">
    <property type="term" value="P:protein neddylation"/>
    <property type="evidence" value="ECO:0000303"/>
    <property type="project" value="ComplexPortal"/>
</dbReference>
<dbReference type="GO" id="GO:0006508">
    <property type="term" value="P:proteolysis"/>
    <property type="evidence" value="ECO:0007669"/>
    <property type="project" value="UniProtKB-KW"/>
</dbReference>
<dbReference type="GO" id="GO:0051726">
    <property type="term" value="P:regulation of cell cycle"/>
    <property type="evidence" value="ECO:0000318"/>
    <property type="project" value="GO_Central"/>
</dbReference>
<dbReference type="GO" id="GO:1903894">
    <property type="term" value="P:regulation of IRE1-mediated unfolded protein response"/>
    <property type="evidence" value="ECO:0000315"/>
    <property type="project" value="ParkinsonsUK-UCL"/>
</dbReference>
<dbReference type="GO" id="GO:0046328">
    <property type="term" value="P:regulation of JNK cascade"/>
    <property type="evidence" value="ECO:0000314"/>
    <property type="project" value="UniProtKB"/>
</dbReference>
<dbReference type="GO" id="GO:2000434">
    <property type="term" value="P:regulation of protein neddylation"/>
    <property type="evidence" value="ECO:0000303"/>
    <property type="project" value="ComplexPortal"/>
</dbReference>
<dbReference type="GO" id="GO:0006412">
    <property type="term" value="P:translation"/>
    <property type="evidence" value="ECO:0000304"/>
    <property type="project" value="ProtInc"/>
</dbReference>
<dbReference type="CDD" id="cd08069">
    <property type="entry name" value="MPN_RPN11_CSN5"/>
    <property type="match status" value="1"/>
</dbReference>
<dbReference type="DisProt" id="DP02290"/>
<dbReference type="FunFam" id="3.40.140.10:FF:000203">
    <property type="entry name" value="COP9 signalosome complex subunit 5"/>
    <property type="match status" value="1"/>
</dbReference>
<dbReference type="Gene3D" id="3.40.140.10">
    <property type="entry name" value="Cytidine Deaminase, domain 2"/>
    <property type="match status" value="1"/>
</dbReference>
<dbReference type="InterPro" id="IPR040961">
    <property type="entry name" value="CSN5_C"/>
</dbReference>
<dbReference type="InterPro" id="IPR000555">
    <property type="entry name" value="JAMM/MPN+_dom"/>
</dbReference>
<dbReference type="InterPro" id="IPR050242">
    <property type="entry name" value="JAMM_MPN+_peptidase_M67A"/>
</dbReference>
<dbReference type="InterPro" id="IPR037518">
    <property type="entry name" value="MPN"/>
</dbReference>
<dbReference type="PANTHER" id="PTHR10410">
    <property type="entry name" value="EUKARYOTIC TRANSLATION INITIATION FACTOR 3 -RELATED"/>
    <property type="match status" value="1"/>
</dbReference>
<dbReference type="Pfam" id="PF18323">
    <property type="entry name" value="CSN5_C"/>
    <property type="match status" value="1"/>
</dbReference>
<dbReference type="Pfam" id="PF01398">
    <property type="entry name" value="JAB"/>
    <property type="match status" value="1"/>
</dbReference>
<dbReference type="SMART" id="SM00232">
    <property type="entry name" value="JAB_MPN"/>
    <property type="match status" value="1"/>
</dbReference>
<dbReference type="SUPFAM" id="SSF102712">
    <property type="entry name" value="JAB1/MPN domain"/>
    <property type="match status" value="1"/>
</dbReference>
<dbReference type="PROSITE" id="PS50249">
    <property type="entry name" value="MPN"/>
    <property type="match status" value="1"/>
</dbReference>
<comment type="function">
    <text evidence="7 8 12 13 21 22 25 29">Probable protease subunit of the COP9 signalosome complex (CSN), a complex involved in various cellular and developmental processes. The CSN complex is an essential regulator of the ubiquitin (Ubl) conjugation pathway by mediating the deneddylation of the cullin subunits of the SCF-type E3 ligase complexes, leading to decrease the Ubl ligase activity of SCF-type complexes such as SCF, CSA or DDB2. The complex is also involved in phosphorylation of p53/TP53, c-jun/JUN, IkappaBalpha/NFKBIA, ITPK1 and IRF8, possibly via its association with CK2 and PKD kinases. CSN-dependent phosphorylation of TP53 and JUN promotes and protects degradation by the Ubl system, respectively. In the complex, it probably acts as the catalytic center that mediates the cleavage of Nedd8 from cullins. It however has no metalloprotease activity by itself and requires the other subunits of the CSN complex. Interacts directly with a large number of proteins that are regulated by the CSN complex, confirming a key role in the complex. Promotes the proteasomal degradation of BRSK2.</text>
</comment>
<comment type="cofactor">
    <cofactor evidence="1">
        <name>a divalent metal cation</name>
        <dbReference type="ChEBI" id="CHEBI:60240"/>
    </cofactor>
</comment>
<comment type="subunit">
    <text evidence="3 4 5 6 7 9 10 11 14 15 16 17 18 19 20 21 22 24 25 26 27 28">Component of the CSN complex, composed of COPS1/GPS1, COPS2, COPS3, COPS4, COPS5, COPS6, COPS7 (COPS7A or COPS7B), COPS8 and COPS9 isoform 1 (PubMed:26456823). In the complex, it probably interacts directly with COPS1, COPS2, COPS4, COPS6 and COPS7 (COPS7A or COPS7B) and COPS9 isoform 1 (PubMed:26456823). Interacts with COPS9 isoform 2 (PubMed:23776465). The CSN complex interacts with the BRISC complex. Also exists as monomeric form. Interacts with TP53, MIF, JUN, UCHL1, NCOA1, HIF1A, CDKN1B, BCL3, GFER, PGR, LHCGR, SMAD4, SMAD7, ID1, ID3, ITGB2 and TOP2A. Part of a complex consisting of RANBP9, Ran, DYRK1B and COPS5. Interacts with IFIT3. Interacts with BRSK2. Interacts with ZDHHC16 (PubMed:17123647). Interacts with MINDY3 (PubMed:21499297). Interacts with FANK1; regulates the phosphorylation of JUN and the transcriptional activity of AP-1 (PubMed:20978819). Interacts with NUPR1; this interaction allows COPS5-dependent CDKN1B nuclear to cytoplasm translocation (PubMed:16300740).</text>
</comment>
<comment type="interaction">
    <interactant intactId="EBI-594661">
        <id>Q92905</id>
    </interactant>
    <interactant intactId="EBI-3232062">
        <id>Q8IWQ3</id>
        <label>BRSK2</label>
    </interactant>
    <organismsDiffer>false</organismsDiffer>
    <experiments>6</experiments>
</comment>
<comment type="interaction">
    <interactant intactId="EBI-594661">
        <id>Q92905</id>
    </interactant>
    <interactant intactId="EBI-748961">
        <id>O95273</id>
        <label>CCNDBP1</label>
    </interactant>
    <organismsDiffer>false</organismsDiffer>
    <experiments>5</experiments>
</comment>
<comment type="interaction">
    <interactant intactId="EBI-594661">
        <id>Q92905</id>
    </interactant>
    <interactant intactId="EBI-519280">
        <id>P46527</id>
        <label>CDKN1B</label>
    </interactant>
    <organismsDiffer>false</organismsDiffer>
    <experiments>3</experiments>
</comment>
<comment type="interaction">
    <interactant intactId="EBI-594661">
        <id>Q92905</id>
    </interactant>
    <interactant intactId="EBI-350590">
        <id>Q9UNS2</id>
        <label>COPS3</label>
    </interactant>
    <organismsDiffer>false</organismsDiffer>
    <experiments>19</experiments>
</comment>
<comment type="interaction">
    <interactant intactId="EBI-594661">
        <id>Q92905</id>
    </interactant>
    <interactant intactId="EBI-486838">
        <id>Q7L5N1</id>
        <label>COPS6</label>
    </interactant>
    <organismsDiffer>false</organismsDiffer>
    <experiments>26</experiments>
</comment>
<comment type="interaction">
    <interactant intactId="EBI-594661">
        <id>Q92905</id>
    </interactant>
    <interactant intactId="EBI-456129">
        <id>Q13618</id>
        <label>CUL3</label>
    </interactant>
    <organismsDiffer>false</organismsDiffer>
    <experiments>13</experiments>
</comment>
<comment type="interaction">
    <interactant intactId="EBI-594661">
        <id>Q92905</id>
    </interactant>
    <interactant intactId="EBI-4303189">
        <id>P55085</id>
        <label>F2RL1</label>
    </interactant>
    <organismsDiffer>false</organismsDiffer>
    <experiments>8</experiments>
</comment>
<comment type="interaction">
    <interactant intactId="EBI-594661">
        <id>Q92905</id>
    </interactant>
    <interactant intactId="EBI-725197">
        <id>Q13098</id>
        <label>GPS1</label>
    </interactant>
    <organismsDiffer>false</organismsDiffer>
    <experiments>19</experiments>
</comment>
<comment type="interaction">
    <interactant intactId="EBI-594661">
        <id>Q92905</id>
    </interactant>
    <interactant intactId="EBI-740290">
        <id>Q969Y2</id>
        <label>GTPBP3</label>
    </interactant>
    <organismsDiffer>false</organismsDiffer>
    <experiments>3</experiments>
</comment>
<comment type="interaction">
    <interactant intactId="EBI-594661">
        <id>Q92905</id>
    </interactant>
    <interactant intactId="EBI-745127">
        <id>O14879</id>
        <label>IFIT3</label>
    </interactant>
    <organismsDiffer>false</organismsDiffer>
    <experiments>4</experiments>
</comment>
<comment type="interaction">
    <interactant intactId="EBI-594661">
        <id>Q92905</id>
    </interactant>
    <interactant intactId="EBI-724928">
        <id>Q9H8M7</id>
        <label>MINDY3</label>
    </interactant>
    <organismsDiffer>false</organismsDiffer>
    <experiments>3</experiments>
</comment>
<comment type="interaction">
    <interactant intactId="EBI-594661">
        <id>Q92905</id>
    </interactant>
    <interactant intactId="EBI-2624570">
        <id>P35372</id>
        <label>OPRM1</label>
    </interactant>
    <organismsDiffer>false</organismsDiffer>
    <experiments>5</experiments>
</comment>
<comment type="interaction">
    <interactant intactId="EBI-594661">
        <id>Q92905</id>
    </interactant>
    <interactant intactId="EBI-2372238">
        <id>Q5VTR2</id>
        <label>RNF20</label>
    </interactant>
    <organismsDiffer>false</organismsDiffer>
    <experiments>2</experiments>
</comment>
<comment type="interaction">
    <interactant intactId="EBI-594661">
        <id>Q92905</id>
    </interactant>
    <interactant intactId="EBI-3861591">
        <id>O15105</id>
        <label>SMAD7</label>
    </interactant>
    <organismsDiffer>false</organismsDiffer>
    <experiments>10</experiments>
</comment>
<comment type="interaction">
    <interactant intactId="EBI-594661">
        <id>Q92905</id>
    </interactant>
    <interactant intactId="EBI-594644">
        <id>P10599</id>
        <label>TXN</label>
    </interactant>
    <organismsDiffer>false</organismsDiffer>
    <experiments>9</experiments>
</comment>
<comment type="interaction">
    <interactant intactId="EBI-594661">
        <id>Q92905</id>
    </interactant>
    <interactant intactId="EBI-714860">
        <id>P09936</id>
        <label>UCHL1</label>
    </interactant>
    <organismsDiffer>false</organismsDiffer>
    <experiments>3</experiments>
</comment>
<comment type="subcellular location">
    <subcellularLocation>
        <location evidence="18 22 25 29">Cytoplasm</location>
        <location evidence="18 22 25 29">Cytosol</location>
    </subcellularLocation>
    <subcellularLocation>
        <location evidence="18 22 25">Nucleus</location>
    </subcellularLocation>
    <subcellularLocation>
        <location evidence="29">Cytoplasm</location>
        <location evidence="29">Perinuclear region</location>
    </subcellularLocation>
    <subcellularLocation>
        <location evidence="23">Cytoplasmic vesicle</location>
        <location evidence="23">Secretory vesicle</location>
        <location evidence="23">Synaptic vesicle</location>
    </subcellularLocation>
    <text evidence="18">Nuclear localization is diminished in the presence of IFIT3.</text>
</comment>
<comment type="domain">
    <text evidence="1">The JAMM motif is essential for the protease activity of the CSN complex resulting in deneddylation of cullins. It constitutes the catalytic center of the complex (By similarity).</text>
</comment>
<comment type="miscellaneous">
    <text>The CSN complex is associated with some 'Lys-63'-specific deubiquitination. Such activity is however not mediated by the core CSN complex but by the BRCC3/BRCC36 component of the BRISC complex.</text>
</comment>
<comment type="similarity">
    <text evidence="31">Belongs to the peptidase M67A family. CSN5 subfamily.</text>
</comment>
<comment type="sequence caution" evidence="31">
    <conflict type="erroneous initiation">
        <sequence resource="EMBL-CDS" id="AAL82571"/>
    </conflict>
    <text>Truncated N-terminus.</text>
</comment>
<evidence type="ECO:0000250" key="1"/>
<evidence type="ECO:0000255" key="2">
    <source>
        <dbReference type="PROSITE-ProRule" id="PRU01182"/>
    </source>
</evidence>
<evidence type="ECO:0000269" key="3">
    <source>
    </source>
</evidence>
<evidence type="ECO:0000269" key="4">
    <source>
    </source>
</evidence>
<evidence type="ECO:0000269" key="5">
    <source>
    </source>
</evidence>
<evidence type="ECO:0000269" key="6">
    <source>
    </source>
</evidence>
<evidence type="ECO:0000269" key="7">
    <source>
    </source>
</evidence>
<evidence type="ECO:0000269" key="8">
    <source>
    </source>
</evidence>
<evidence type="ECO:0000269" key="9">
    <source>
    </source>
</evidence>
<evidence type="ECO:0000269" key="10">
    <source>
    </source>
</evidence>
<evidence type="ECO:0000269" key="11">
    <source>
    </source>
</evidence>
<evidence type="ECO:0000269" key="12">
    <source>
    </source>
</evidence>
<evidence type="ECO:0000269" key="13">
    <source>
    </source>
</evidence>
<evidence type="ECO:0000269" key="14">
    <source>
    </source>
</evidence>
<evidence type="ECO:0000269" key="15">
    <source>
    </source>
</evidence>
<evidence type="ECO:0000269" key="16">
    <source>
    </source>
</evidence>
<evidence type="ECO:0000269" key="17">
    <source>
    </source>
</evidence>
<evidence type="ECO:0000269" key="18">
    <source>
    </source>
</evidence>
<evidence type="ECO:0000269" key="19">
    <source>
    </source>
</evidence>
<evidence type="ECO:0000269" key="20">
    <source>
    </source>
</evidence>
<evidence type="ECO:0000269" key="21">
    <source>
    </source>
</evidence>
<evidence type="ECO:0000269" key="22">
    <source>
    </source>
</evidence>
<evidence type="ECO:0000269" key="23">
    <source>
    </source>
</evidence>
<evidence type="ECO:0000269" key="24">
    <source>
    </source>
</evidence>
<evidence type="ECO:0000269" key="25">
    <source>
    </source>
</evidence>
<evidence type="ECO:0000269" key="26">
    <source>
    </source>
</evidence>
<evidence type="ECO:0000269" key="27">
    <source>
    </source>
</evidence>
<evidence type="ECO:0000269" key="28">
    <source>
    </source>
</evidence>
<evidence type="ECO:0000269" key="29">
    <source>
    </source>
</evidence>
<evidence type="ECO:0000269" key="30">
    <source ref="6"/>
</evidence>
<evidence type="ECO:0000305" key="31"/>
<evidence type="ECO:0007829" key="32">
    <source>
        <dbReference type="PDB" id="4F7O"/>
    </source>
</evidence>
<evidence type="ECO:0007829" key="33">
    <source>
        <dbReference type="PDB" id="5JOH"/>
    </source>
</evidence>
<organism>
    <name type="scientific">Homo sapiens</name>
    <name type="common">Human</name>
    <dbReference type="NCBI Taxonomy" id="9606"/>
    <lineage>
        <taxon>Eukaryota</taxon>
        <taxon>Metazoa</taxon>
        <taxon>Chordata</taxon>
        <taxon>Craniata</taxon>
        <taxon>Vertebrata</taxon>
        <taxon>Euteleostomi</taxon>
        <taxon>Mammalia</taxon>
        <taxon>Eutheria</taxon>
        <taxon>Euarchontoglires</taxon>
        <taxon>Primates</taxon>
        <taxon>Haplorrhini</taxon>
        <taxon>Catarrhini</taxon>
        <taxon>Hominidae</taxon>
        <taxon>Homo</taxon>
    </lineage>
</organism>
<feature type="initiator methionine" description="Removed" evidence="20 30">
    <location>
        <position position="1"/>
    </location>
</feature>
<feature type="chain" id="PRO_0000194835" description="COP9 signalosome complex subunit 5">
    <location>
        <begin position="2"/>
        <end position="334"/>
    </location>
</feature>
<feature type="domain" description="MPN" evidence="2">
    <location>
        <begin position="55"/>
        <end position="192"/>
    </location>
</feature>
<feature type="short sequence motif" description="JAMM motif" evidence="2">
    <location>
        <begin position="138"/>
        <end position="151"/>
    </location>
</feature>
<feature type="binding site" evidence="2">
    <location>
        <position position="138"/>
    </location>
    <ligand>
        <name>Zn(2+)</name>
        <dbReference type="ChEBI" id="CHEBI:29105"/>
        <note>catalytic</note>
    </ligand>
</feature>
<feature type="binding site" evidence="2">
    <location>
        <position position="140"/>
    </location>
    <ligand>
        <name>Zn(2+)</name>
        <dbReference type="ChEBI" id="CHEBI:29105"/>
        <note>catalytic</note>
    </ligand>
</feature>
<feature type="binding site" evidence="2">
    <location>
        <position position="151"/>
    </location>
    <ligand>
        <name>Zn(2+)</name>
        <dbReference type="ChEBI" id="CHEBI:29105"/>
        <note>catalytic</note>
    </ligand>
</feature>
<feature type="modified residue" description="N-acetylalanine" evidence="20 30">
    <location>
        <position position="2"/>
    </location>
</feature>
<feature type="mutagenesis site" description="Abolishes ability to deneddylate cullins, without affecting the 'Lys-63'-specific deubiquitination associated with the COP9 signalosome complex." evidence="21">
    <original>H</original>
    <variation>Q</variation>
    <location>
        <position position="138"/>
    </location>
</feature>
<feature type="sequence conflict" description="In Ref. 2; AAD03468." evidence="31" ref="2">
    <original>KPW</original>
    <variation>NLG</variation>
    <location>
        <begin position="43"/>
        <end position="45"/>
    </location>
</feature>
<feature type="sequence conflict" description="In Ref. 1; AAB16847." evidence="31" ref="1">
    <original>R</original>
    <variation>H</variation>
    <location>
        <position position="129"/>
    </location>
</feature>
<feature type="helix" evidence="33">
    <location>
        <begin position="6"/>
        <end position="42"/>
    </location>
</feature>
<feature type="helix" evidence="33">
    <location>
        <begin position="44"/>
        <end position="46"/>
    </location>
</feature>
<feature type="strand" evidence="33">
    <location>
        <begin position="54"/>
        <end position="58"/>
    </location>
</feature>
<feature type="helix" evidence="33">
    <location>
        <begin position="59"/>
        <end position="71"/>
    </location>
</feature>
<feature type="turn" evidence="33">
    <location>
        <begin position="72"/>
        <end position="74"/>
    </location>
</feature>
<feature type="strand" evidence="33">
    <location>
        <begin position="78"/>
        <end position="86"/>
    </location>
</feature>
<feature type="strand" evidence="33">
    <location>
        <begin position="89"/>
        <end position="97"/>
    </location>
</feature>
<feature type="helix" evidence="32">
    <location>
        <begin position="104"/>
        <end position="107"/>
    </location>
</feature>
<feature type="helix" evidence="33">
    <location>
        <begin position="111"/>
        <end position="126"/>
    </location>
</feature>
<feature type="strand" evidence="33">
    <location>
        <begin position="132"/>
        <end position="139"/>
    </location>
</feature>
<feature type="turn" evidence="33">
    <location>
        <begin position="141"/>
        <end position="143"/>
    </location>
</feature>
<feature type="helix" evidence="33">
    <location>
        <begin position="149"/>
        <end position="161"/>
    </location>
</feature>
<feature type="strand" evidence="33">
    <location>
        <begin position="166"/>
        <end position="170"/>
    </location>
</feature>
<feature type="strand" evidence="33">
    <location>
        <begin position="183"/>
        <end position="188"/>
    </location>
</feature>
<feature type="turn" evidence="33">
    <location>
        <begin position="208"/>
        <end position="210"/>
    </location>
</feature>
<feature type="helix" evidence="33">
    <location>
        <begin position="211"/>
        <end position="217"/>
    </location>
</feature>
<feature type="strand" evidence="33">
    <location>
        <begin position="220"/>
        <end position="223"/>
    </location>
</feature>
<feature type="strand" evidence="33">
    <location>
        <begin position="225"/>
        <end position="229"/>
    </location>
</feature>
<feature type="helix" evidence="33">
    <location>
        <begin position="233"/>
        <end position="235"/>
    </location>
</feature>